<gene>
    <name evidence="6" type="primary">OFUT14</name>
    <name evidence="5 10" type="synonym">GT68</name>
    <name evidence="7" type="ordered locus">At1g53770</name>
    <name evidence="8" type="ORF">F22G10.23</name>
    <name evidence="9" type="ORF">T18A20.22</name>
</gene>
<evidence type="ECO:0000250" key="1">
    <source>
        <dbReference type="UniProtKB" id="Q9Y2G5"/>
    </source>
</evidence>
<evidence type="ECO:0000255" key="2"/>
<evidence type="ECO:0000255" key="3">
    <source>
        <dbReference type="PROSITE-ProRule" id="PRU00498"/>
    </source>
</evidence>
<evidence type="ECO:0000256" key="4">
    <source>
        <dbReference type="SAM" id="MobiDB-lite"/>
    </source>
</evidence>
<evidence type="ECO:0000303" key="5">
    <source>
    </source>
</evidence>
<evidence type="ECO:0000305" key="6"/>
<evidence type="ECO:0000312" key="7">
    <source>
        <dbReference type="Araport" id="AT1G53770"/>
    </source>
</evidence>
<evidence type="ECO:0000312" key="8">
    <source>
        <dbReference type="EMBL" id="AAG51963.1"/>
    </source>
</evidence>
<evidence type="ECO:0000312" key="9">
    <source>
        <dbReference type="EMBL" id="AC009324"/>
    </source>
</evidence>
<evidence type="ECO:0000312" key="10">
    <source>
        <dbReference type="EMBL" id="AHL38903.1"/>
    </source>
</evidence>
<protein>
    <recommendedName>
        <fullName evidence="6">O-fucosyltransferase 14</fullName>
        <shortName evidence="6">O-FucT-14</shortName>
        <ecNumber evidence="6">2.4.1.-</ecNumber>
    </recommendedName>
    <alternativeName>
        <fullName evidence="6">O-fucosyltransferase family protein</fullName>
    </alternativeName>
</protein>
<reference key="1">
    <citation type="journal article" date="2014" name="Plant J.">
        <title>The plant glycosyltransferase clone collection for functional genomics.</title>
        <authorList>
            <person name="Lao J."/>
            <person name="Oikawa A."/>
            <person name="Bromley J.R."/>
            <person name="McInerney P."/>
            <person name="Suttangkakul A."/>
            <person name="Smith-Moritz A.M."/>
            <person name="Plahar H."/>
            <person name="Chiu T.-Y."/>
            <person name="Gonzalez Fernandez-Nino S.M.G."/>
            <person name="Ebert B."/>
            <person name="Yang F."/>
            <person name="Christiansen K.M."/>
            <person name="Hansen S.F."/>
            <person name="Stonebloom S."/>
            <person name="Adams P.D."/>
            <person name="Ronald P.C."/>
            <person name="Hillson N.J."/>
            <person name="Hadi M.Z."/>
            <person name="Vega-Sanchez M.E."/>
            <person name="Loque D."/>
            <person name="Scheller H.V."/>
            <person name="Heazlewood J.L."/>
        </authorList>
    </citation>
    <scope>NUCLEOTIDE SEQUENCE [MRNA]</scope>
    <scope>WEB RESOURCE</scope>
    <source>
        <strain>cv. Columbia</strain>
    </source>
</reference>
<reference key="2">
    <citation type="journal article" date="2000" name="Nature">
        <title>Sequence and analysis of chromosome 1 of the plant Arabidopsis thaliana.</title>
        <authorList>
            <person name="Theologis A."/>
            <person name="Ecker J.R."/>
            <person name="Palm C.J."/>
            <person name="Federspiel N.A."/>
            <person name="Kaul S."/>
            <person name="White O."/>
            <person name="Alonso J."/>
            <person name="Altafi H."/>
            <person name="Araujo R."/>
            <person name="Bowman C.L."/>
            <person name="Brooks S.Y."/>
            <person name="Buehler E."/>
            <person name="Chan A."/>
            <person name="Chao Q."/>
            <person name="Chen H."/>
            <person name="Cheuk R.F."/>
            <person name="Chin C.W."/>
            <person name="Chung M.K."/>
            <person name="Conn L."/>
            <person name="Conway A.B."/>
            <person name="Conway A.R."/>
            <person name="Creasy T.H."/>
            <person name="Dewar K."/>
            <person name="Dunn P."/>
            <person name="Etgu P."/>
            <person name="Feldblyum T.V."/>
            <person name="Feng J.-D."/>
            <person name="Fong B."/>
            <person name="Fujii C.Y."/>
            <person name="Gill J.E."/>
            <person name="Goldsmith A.D."/>
            <person name="Haas B."/>
            <person name="Hansen N.F."/>
            <person name="Hughes B."/>
            <person name="Huizar L."/>
            <person name="Hunter J.L."/>
            <person name="Jenkins J."/>
            <person name="Johnson-Hopson C."/>
            <person name="Khan S."/>
            <person name="Khaykin E."/>
            <person name="Kim C.J."/>
            <person name="Koo H.L."/>
            <person name="Kremenetskaia I."/>
            <person name="Kurtz D.B."/>
            <person name="Kwan A."/>
            <person name="Lam B."/>
            <person name="Langin-Hooper S."/>
            <person name="Lee A."/>
            <person name="Lee J.M."/>
            <person name="Lenz C.A."/>
            <person name="Li J.H."/>
            <person name="Li Y.-P."/>
            <person name="Lin X."/>
            <person name="Liu S.X."/>
            <person name="Liu Z.A."/>
            <person name="Luros J.S."/>
            <person name="Maiti R."/>
            <person name="Marziali A."/>
            <person name="Militscher J."/>
            <person name="Miranda M."/>
            <person name="Nguyen M."/>
            <person name="Nierman W.C."/>
            <person name="Osborne B.I."/>
            <person name="Pai G."/>
            <person name="Peterson J."/>
            <person name="Pham P.K."/>
            <person name="Rizzo M."/>
            <person name="Rooney T."/>
            <person name="Rowley D."/>
            <person name="Sakano H."/>
            <person name="Salzberg S.L."/>
            <person name="Schwartz J.R."/>
            <person name="Shinn P."/>
            <person name="Southwick A.M."/>
            <person name="Sun H."/>
            <person name="Tallon L.J."/>
            <person name="Tambunga G."/>
            <person name="Toriumi M.J."/>
            <person name="Town C.D."/>
            <person name="Utterback T."/>
            <person name="Van Aken S."/>
            <person name="Vaysberg M."/>
            <person name="Vysotskaia V.S."/>
            <person name="Walker M."/>
            <person name="Wu D."/>
            <person name="Yu G."/>
            <person name="Fraser C.M."/>
            <person name="Venter J.C."/>
            <person name="Davis R.W."/>
        </authorList>
    </citation>
    <scope>NUCLEOTIDE SEQUENCE [LARGE SCALE GENOMIC DNA]</scope>
    <source>
        <strain>cv. Columbia</strain>
    </source>
</reference>
<reference key="3">
    <citation type="journal article" date="2017" name="Plant J.">
        <title>Araport11: a complete reannotation of the Arabidopsis thaliana reference genome.</title>
        <authorList>
            <person name="Cheng C.Y."/>
            <person name="Krishnakumar V."/>
            <person name="Chan A.P."/>
            <person name="Thibaud-Nissen F."/>
            <person name="Schobel S."/>
            <person name="Town C.D."/>
        </authorList>
    </citation>
    <scope>GENOME REANNOTATION</scope>
    <source>
        <strain>cv. Columbia</strain>
    </source>
</reference>
<reference key="4">
    <citation type="journal article" date="2003" name="Science">
        <title>Empirical analysis of transcriptional activity in the Arabidopsis genome.</title>
        <authorList>
            <person name="Yamada K."/>
            <person name="Lim J."/>
            <person name="Dale J.M."/>
            <person name="Chen H."/>
            <person name="Shinn P."/>
            <person name="Palm C.J."/>
            <person name="Southwick A.M."/>
            <person name="Wu H.C."/>
            <person name="Kim C.J."/>
            <person name="Nguyen M."/>
            <person name="Pham P.K."/>
            <person name="Cheuk R.F."/>
            <person name="Karlin-Newmann G."/>
            <person name="Liu S.X."/>
            <person name="Lam B."/>
            <person name="Sakano H."/>
            <person name="Wu T."/>
            <person name="Yu G."/>
            <person name="Miranda M."/>
            <person name="Quach H.L."/>
            <person name="Tripp M."/>
            <person name="Chang C.H."/>
            <person name="Lee J.M."/>
            <person name="Toriumi M.J."/>
            <person name="Chan M.M."/>
            <person name="Tang C.C."/>
            <person name="Onodera C.S."/>
            <person name="Deng J.M."/>
            <person name="Akiyama K."/>
            <person name="Ansari Y."/>
            <person name="Arakawa T."/>
            <person name="Banh J."/>
            <person name="Banno F."/>
            <person name="Bowser L."/>
            <person name="Brooks S.Y."/>
            <person name="Carninci P."/>
            <person name="Chao Q."/>
            <person name="Choy N."/>
            <person name="Enju A."/>
            <person name="Goldsmith A.D."/>
            <person name="Gurjal M."/>
            <person name="Hansen N.F."/>
            <person name="Hayashizaki Y."/>
            <person name="Johnson-Hopson C."/>
            <person name="Hsuan V.W."/>
            <person name="Iida K."/>
            <person name="Karnes M."/>
            <person name="Khan S."/>
            <person name="Koesema E."/>
            <person name="Ishida J."/>
            <person name="Jiang P.X."/>
            <person name="Jones T."/>
            <person name="Kawai J."/>
            <person name="Kamiya A."/>
            <person name="Meyers C."/>
            <person name="Nakajima M."/>
            <person name="Narusaka M."/>
            <person name="Seki M."/>
            <person name="Sakurai T."/>
            <person name="Satou M."/>
            <person name="Tamse R."/>
            <person name="Vaysberg M."/>
            <person name="Wallender E.K."/>
            <person name="Wong C."/>
            <person name="Yamamura Y."/>
            <person name="Yuan S."/>
            <person name="Shinozaki K."/>
            <person name="Davis R.W."/>
            <person name="Theologis A."/>
            <person name="Ecker J.R."/>
        </authorList>
    </citation>
    <scope>NUCLEOTIDE SEQUENCE [LARGE SCALE MRNA]</scope>
    <source>
        <strain>cv. Columbia</strain>
    </source>
</reference>
<reference key="5">
    <citation type="submission" date="2006-07" db="EMBL/GenBank/DDBJ databases">
        <title>Large-scale analysis of RIKEN Arabidopsis full-length (RAFL) cDNAs.</title>
        <authorList>
            <person name="Totoki Y."/>
            <person name="Seki M."/>
            <person name="Ishida J."/>
            <person name="Nakajima M."/>
            <person name="Enju A."/>
            <person name="Kamiya A."/>
            <person name="Narusaka M."/>
            <person name="Shin-i T."/>
            <person name="Nakagawa M."/>
            <person name="Sakamoto N."/>
            <person name="Oishi K."/>
            <person name="Kohara Y."/>
            <person name="Kobayashi M."/>
            <person name="Toyoda A."/>
            <person name="Sakaki Y."/>
            <person name="Sakurai T."/>
            <person name="Iida K."/>
            <person name="Akiyama K."/>
            <person name="Satou M."/>
            <person name="Toyoda T."/>
            <person name="Konagaya A."/>
            <person name="Carninci P."/>
            <person name="Kawai J."/>
            <person name="Hayashizaki Y."/>
            <person name="Shinozaki K."/>
        </authorList>
    </citation>
    <scope>NUCLEOTIDE SEQUENCE [LARGE SCALE MRNA]</scope>
    <source>
        <strain>cv. Columbia</strain>
    </source>
</reference>
<reference key="6">
    <citation type="journal article" date="2012" name="Front. Plant Sci.">
        <title>Plant glycosyltransferases beyond CAZy: a perspective on DUF families.</title>
        <authorList>
            <person name="Hansen S.F."/>
            <person name="Harholt J."/>
            <person name="Oikawa A."/>
            <person name="Scheller H.V."/>
        </authorList>
    </citation>
    <scope>REVIEW</scope>
</reference>
<reference key="7">
    <citation type="journal article" date="2012" name="PLoS ONE">
        <title>Identification of putative rhamnogalacturonan-II specific glycosyltransferases in Arabidopsis using a combination of bioinformatics approaches.</title>
        <authorList>
            <person name="Voxeur A."/>
            <person name="Andre A."/>
            <person name="Breton C."/>
            <person name="Lerouge P."/>
        </authorList>
    </citation>
    <scope>GENE FAMILY</scope>
</reference>
<reference key="8">
    <citation type="journal article" date="2013" name="Plant J.">
        <title>Identification of an additional protein involved in mannan biosynthesis.</title>
        <authorList>
            <person name="Wang Y."/>
            <person name="Mortimer J.C."/>
            <person name="Davis J."/>
            <person name="Dupree P."/>
            <person name="Keegstra K."/>
        </authorList>
    </citation>
    <scope>GENE FAMILY</scope>
</reference>
<organism>
    <name type="scientific">Arabidopsis thaliana</name>
    <name type="common">Mouse-ear cress</name>
    <dbReference type="NCBI Taxonomy" id="3702"/>
    <lineage>
        <taxon>Eukaryota</taxon>
        <taxon>Viridiplantae</taxon>
        <taxon>Streptophyta</taxon>
        <taxon>Embryophyta</taxon>
        <taxon>Tracheophyta</taxon>
        <taxon>Spermatophyta</taxon>
        <taxon>Magnoliopsida</taxon>
        <taxon>eudicotyledons</taxon>
        <taxon>Gunneridae</taxon>
        <taxon>Pentapetalae</taxon>
        <taxon>rosids</taxon>
        <taxon>malvids</taxon>
        <taxon>Brassicales</taxon>
        <taxon>Brassicaceae</taxon>
        <taxon>Camelineae</taxon>
        <taxon>Arabidopsis</taxon>
    </lineage>
</organism>
<accession>Q501D6</accession>
<accession>Q0WQ13</accession>
<accession>Q9C8N1</accession>
<feature type="chain" id="PRO_0000442076" description="O-fucosyltransferase 14">
    <location>
        <begin position="1"/>
        <end position="563"/>
    </location>
</feature>
<feature type="transmembrane region" description="Helical; Signal-anchor for type II membrane protein" evidence="6">
    <location>
        <begin position="73"/>
        <end position="93"/>
    </location>
</feature>
<feature type="region of interest" description="Disordered" evidence="4">
    <location>
        <begin position="1"/>
        <end position="25"/>
    </location>
</feature>
<feature type="compositionally biased region" description="Low complexity" evidence="4">
    <location>
        <begin position="1"/>
        <end position="16"/>
    </location>
</feature>
<feature type="binding site" evidence="1">
    <location>
        <begin position="412"/>
        <end position="414"/>
    </location>
    <ligand>
        <name>substrate</name>
    </ligand>
</feature>
<feature type="binding site" evidence="1">
    <location>
        <begin position="528"/>
        <end position="529"/>
    </location>
    <ligand>
        <name>substrate</name>
    </ligand>
</feature>
<feature type="glycosylation site" description="N-linked (GlcNAc...) asparagine" evidence="3">
    <location>
        <position position="135"/>
    </location>
</feature>
<feature type="glycosylation site" description="N-linked (GlcNAc...) asparagine" evidence="3">
    <location>
        <position position="140"/>
    </location>
</feature>
<feature type="glycosylation site" description="N-linked (GlcNAc...) asparagine" evidence="3">
    <location>
        <position position="339"/>
    </location>
</feature>
<feature type="sequence conflict" description="In Ref. 5; BAF00786." evidence="6" ref="5">
    <original>C</original>
    <variation>Y</variation>
    <location>
        <position position="265"/>
    </location>
</feature>
<comment type="pathway">
    <text evidence="6">Glycan metabolism.</text>
</comment>
<comment type="subcellular location">
    <subcellularLocation>
        <location evidence="2">Membrane</location>
        <topology evidence="6">Single-pass type II membrane protein</topology>
    </subcellularLocation>
</comment>
<comment type="alternative products">
    <event type="alternative splicing"/>
    <isoform>
        <id>Q501D6-1</id>
        <name>1</name>
        <sequence type="displayed"/>
    </isoform>
    <text evidence="6">Additional isoforms seem to exist.</text>
</comment>
<comment type="similarity">
    <text evidence="6">Belongs to the glycosyltransferase GT106 family.</text>
</comment>
<comment type="sequence caution" evidence="6">
    <conflict type="erroneous gene model prediction">
        <sequence resource="EMBL-CDS" id="AAG51963"/>
    </conflict>
</comment>
<sequence>MVKVSSSTTSSSSSSSPDEESDLQNLLEESDSQIDQFRISDEAAEQRPTFDVESLRSRLRRSFKLNLTKKQSIFIFLPIVIILIYLSTDFSNYFSVKVPNSAFRSNTLTGRVHESDLQALYLLRKQESDLFSIWNHTVSNLSTIDDVKSAVFRQISLNRQIQNALLSPHKTGNVDIGGSSDGYFAGGSCRKVDQKLNGRKTIQWKPRPDKFLFAICLSGQMSNHLICLEKHMFFAALLKRVLVIPSHRFDYHYSRIIDIDRINTCLGRTVVVSFEEFWKKDKNRKKHHHVHINRFICYFSKPEPCYVDKEHITKLKALGITVGGKLDTPWEEDIARPSNKTAEEVEANFRSDDDVIAIGDVFYANVEREWVMQPGGPVAHKCRTLIEPNRLILLTAQRFIQTFLGKNYIALHFRRHGFLKFCNAKNPSCFFPIPQAASCITRLIEKVEAPVLYLSTDAAESETGLLQSLLILNGKTVPLVKRPARDSAEKWDALLYRHGLEGDSQVEAMLDKTICALSSVFIGASGSTFTEDILRLRKDWGTASECDEYLCANEQPNFIADHE</sequence>
<proteinExistence type="evidence at transcript level"/>
<dbReference type="EC" id="2.4.1.-" evidence="6"/>
<dbReference type="EMBL" id="KJ138963">
    <property type="protein sequence ID" value="AHL38903.1"/>
    <property type="molecule type" value="mRNA"/>
</dbReference>
<dbReference type="EMBL" id="AC009324">
    <property type="status" value="NOT_ANNOTATED_CDS"/>
    <property type="molecule type" value="Genomic_DNA"/>
</dbReference>
<dbReference type="EMBL" id="AC024260">
    <property type="protein sequence ID" value="AAG51963.1"/>
    <property type="status" value="ALT_SEQ"/>
    <property type="molecule type" value="Genomic_DNA"/>
</dbReference>
<dbReference type="EMBL" id="CP002684">
    <property type="protein sequence ID" value="AEE32995.1"/>
    <property type="molecule type" value="Genomic_DNA"/>
</dbReference>
<dbReference type="EMBL" id="BT022031">
    <property type="protein sequence ID" value="AAY25443.1"/>
    <property type="molecule type" value="mRNA"/>
</dbReference>
<dbReference type="EMBL" id="AK228897">
    <property type="protein sequence ID" value="BAF00786.1"/>
    <property type="molecule type" value="mRNA"/>
</dbReference>
<dbReference type="RefSeq" id="NP_175780.1">
    <molecule id="Q501D6-1"/>
    <property type="nucleotide sequence ID" value="NM_104254.4"/>
</dbReference>
<dbReference type="FunCoup" id="Q501D6">
    <property type="interactions" value="764"/>
</dbReference>
<dbReference type="STRING" id="3702.Q501D6"/>
<dbReference type="GlyCosmos" id="Q501D6">
    <property type="glycosylation" value="3 sites, No reported glycans"/>
</dbReference>
<dbReference type="GlyGen" id="Q501D6">
    <property type="glycosylation" value="3 sites"/>
</dbReference>
<dbReference type="iPTMnet" id="Q501D6"/>
<dbReference type="PaxDb" id="3702-AT1G53770.2"/>
<dbReference type="EnsemblPlants" id="AT1G53770.1">
    <molecule id="Q501D6-1"/>
    <property type="protein sequence ID" value="AT1G53770.1"/>
    <property type="gene ID" value="AT1G53770"/>
</dbReference>
<dbReference type="GeneID" id="841814"/>
<dbReference type="Gramene" id="AT1G53770.1">
    <molecule id="Q501D6-1"/>
    <property type="protein sequence ID" value="AT1G53770.1"/>
    <property type="gene ID" value="AT1G53770"/>
</dbReference>
<dbReference type="KEGG" id="ath:AT1G53770"/>
<dbReference type="Araport" id="AT1G53770"/>
<dbReference type="TAIR" id="AT1G53770"/>
<dbReference type="eggNOG" id="ENOG502QS4M">
    <property type="taxonomic scope" value="Eukaryota"/>
</dbReference>
<dbReference type="HOGENOM" id="CLU_039118_0_0_1"/>
<dbReference type="InParanoid" id="Q501D6"/>
<dbReference type="PhylomeDB" id="Q501D6"/>
<dbReference type="PRO" id="PR:Q501D6"/>
<dbReference type="Proteomes" id="UP000006548">
    <property type="component" value="Chromosome 1"/>
</dbReference>
<dbReference type="ExpressionAtlas" id="Q501D6">
    <property type="expression patterns" value="baseline and differential"/>
</dbReference>
<dbReference type="GO" id="GO:0016020">
    <property type="term" value="C:membrane"/>
    <property type="evidence" value="ECO:0007669"/>
    <property type="project" value="UniProtKB-SubCell"/>
</dbReference>
<dbReference type="GO" id="GO:0046922">
    <property type="term" value="F:peptide-O-fucosyltransferase activity"/>
    <property type="evidence" value="ECO:0007669"/>
    <property type="project" value="InterPro"/>
</dbReference>
<dbReference type="GO" id="GO:0006004">
    <property type="term" value="P:fucose metabolic process"/>
    <property type="evidence" value="ECO:0007669"/>
    <property type="project" value="UniProtKB-KW"/>
</dbReference>
<dbReference type="CDD" id="cd11296">
    <property type="entry name" value="O-FucT_like"/>
    <property type="match status" value="1"/>
</dbReference>
<dbReference type="FunFam" id="3.40.50.11350:FF:000005">
    <property type="entry name" value="O-fucosyltransferase family protein"/>
    <property type="match status" value="1"/>
</dbReference>
<dbReference type="Gene3D" id="3.40.50.11350">
    <property type="match status" value="1"/>
</dbReference>
<dbReference type="InterPro" id="IPR045130">
    <property type="entry name" value="OFUT2-like"/>
</dbReference>
<dbReference type="PANTHER" id="PTHR13398">
    <property type="entry name" value="GDP-FUCOSE PROTEIN O-FUCOSYLTRANSFERASE 2"/>
    <property type="match status" value="1"/>
</dbReference>
<dbReference type="PANTHER" id="PTHR13398:SF3">
    <property type="entry name" value="O-FUCOSYLTRANSFERASE 14"/>
    <property type="match status" value="1"/>
</dbReference>
<keyword id="KW-0025">Alternative splicing</keyword>
<keyword id="KW-0119">Carbohydrate metabolism</keyword>
<keyword id="KW-0294">Fucose metabolism</keyword>
<keyword id="KW-0325">Glycoprotein</keyword>
<keyword id="KW-0328">Glycosyltransferase</keyword>
<keyword id="KW-0472">Membrane</keyword>
<keyword id="KW-1185">Reference proteome</keyword>
<keyword id="KW-0735">Signal-anchor</keyword>
<keyword id="KW-0808">Transferase</keyword>
<keyword id="KW-0812">Transmembrane</keyword>
<keyword id="KW-1133">Transmembrane helix</keyword>
<name>OFT14_ARATH</name>